<reference key="1">
    <citation type="submission" date="1998-10" db="EMBL/GenBank/DDBJ databases">
        <title>Isolation and characterisation of the ndhCKJ-cluster of the cyanobacteria Anabaena sp. PCC 7120.</title>
        <authorList>
            <person name="Happe T."/>
            <person name="Schiefer W."/>
            <person name="Boehme H."/>
        </authorList>
    </citation>
    <scope>NUCLEOTIDE SEQUENCE [GENOMIC DNA]</scope>
</reference>
<reference key="2">
    <citation type="journal article" date="2001" name="DNA Res.">
        <title>Complete genomic sequence of the filamentous nitrogen-fixing cyanobacterium Anabaena sp. strain PCC 7120.</title>
        <authorList>
            <person name="Kaneko T."/>
            <person name="Nakamura Y."/>
            <person name="Wolk C.P."/>
            <person name="Kuritz T."/>
            <person name="Sasamoto S."/>
            <person name="Watanabe A."/>
            <person name="Iriguchi M."/>
            <person name="Ishikawa A."/>
            <person name="Kawashima K."/>
            <person name="Kimura T."/>
            <person name="Kishida Y."/>
            <person name="Kohara M."/>
            <person name="Matsumoto M."/>
            <person name="Matsuno A."/>
            <person name="Muraki A."/>
            <person name="Nakazaki N."/>
            <person name="Shimpo S."/>
            <person name="Sugimoto M."/>
            <person name="Takazawa M."/>
            <person name="Yamada M."/>
            <person name="Yasuda M."/>
            <person name="Tabata S."/>
        </authorList>
    </citation>
    <scope>NUCLEOTIDE SEQUENCE [LARGE SCALE GENOMIC DNA]</scope>
    <source>
        <strain>PCC 7120 / SAG 25.82 / UTEX 2576</strain>
    </source>
</reference>
<dbReference type="EMBL" id="AJ012180">
    <property type="protein sequence ID" value="CAB45638.1"/>
    <property type="molecule type" value="Genomic_DNA"/>
</dbReference>
<dbReference type="EMBL" id="BA000019">
    <property type="protein sequence ID" value="BAB75542.1"/>
    <property type="molecule type" value="Genomic_DNA"/>
</dbReference>
<dbReference type="PIR" id="AD2286">
    <property type="entry name" value="AD2286"/>
</dbReference>
<dbReference type="RefSeq" id="WP_010997984.1">
    <property type="nucleotide sequence ID" value="NZ_RSCN01000011.1"/>
</dbReference>
<dbReference type="SMR" id="Q9WWN1"/>
<dbReference type="STRING" id="103690.gene:10495885"/>
<dbReference type="KEGG" id="ana:alr3843"/>
<dbReference type="eggNOG" id="COG1773">
    <property type="taxonomic scope" value="Bacteria"/>
</dbReference>
<dbReference type="OrthoDB" id="9802447at2"/>
<dbReference type="Proteomes" id="UP000002483">
    <property type="component" value="Chromosome"/>
</dbReference>
<dbReference type="GO" id="GO:0009055">
    <property type="term" value="F:electron transfer activity"/>
    <property type="evidence" value="ECO:0007669"/>
    <property type="project" value="TreeGrafter"/>
</dbReference>
<dbReference type="GO" id="GO:0005506">
    <property type="term" value="F:iron ion binding"/>
    <property type="evidence" value="ECO:0007669"/>
    <property type="project" value="InterPro"/>
</dbReference>
<dbReference type="GO" id="GO:0043448">
    <property type="term" value="P:alkane catabolic process"/>
    <property type="evidence" value="ECO:0007669"/>
    <property type="project" value="TreeGrafter"/>
</dbReference>
<dbReference type="CDD" id="cd00730">
    <property type="entry name" value="rubredoxin"/>
    <property type="match status" value="1"/>
</dbReference>
<dbReference type="Gene3D" id="2.20.28.10">
    <property type="match status" value="1"/>
</dbReference>
<dbReference type="InterPro" id="IPR024934">
    <property type="entry name" value="Rubredoxin-like_dom"/>
</dbReference>
<dbReference type="InterPro" id="IPR024935">
    <property type="entry name" value="Rubredoxin_dom"/>
</dbReference>
<dbReference type="InterPro" id="IPR050526">
    <property type="entry name" value="Rubredoxin_ET"/>
</dbReference>
<dbReference type="PANTHER" id="PTHR47627">
    <property type="entry name" value="RUBREDOXIN"/>
    <property type="match status" value="1"/>
</dbReference>
<dbReference type="PANTHER" id="PTHR47627:SF1">
    <property type="entry name" value="RUBREDOXIN-1-RELATED"/>
    <property type="match status" value="1"/>
</dbReference>
<dbReference type="Pfam" id="PF00301">
    <property type="entry name" value="Rubredoxin"/>
    <property type="match status" value="1"/>
</dbReference>
<dbReference type="PRINTS" id="PR00163">
    <property type="entry name" value="RUBREDOXIN"/>
</dbReference>
<dbReference type="SUPFAM" id="SSF57802">
    <property type="entry name" value="Rubredoxin-like"/>
    <property type="match status" value="1"/>
</dbReference>
<dbReference type="PROSITE" id="PS50903">
    <property type="entry name" value="RUBREDOXIN_LIKE"/>
    <property type="match status" value="1"/>
</dbReference>
<organism>
    <name type="scientific">Nostoc sp. (strain PCC 7120 / SAG 25.82 / UTEX 2576)</name>
    <dbReference type="NCBI Taxonomy" id="103690"/>
    <lineage>
        <taxon>Bacteria</taxon>
        <taxon>Bacillati</taxon>
        <taxon>Cyanobacteriota</taxon>
        <taxon>Cyanophyceae</taxon>
        <taxon>Nostocales</taxon>
        <taxon>Nostocaceae</taxon>
        <taxon>Nostoc</taxon>
    </lineage>
</organism>
<evidence type="ECO:0000250" key="1"/>
<evidence type="ECO:0000255" key="2">
    <source>
        <dbReference type="PROSITE-ProRule" id="PRU00241"/>
    </source>
</evidence>
<evidence type="ECO:0000305" key="3"/>
<name>RUBR_NOSS1</name>
<proteinExistence type="inferred from homology"/>
<protein>
    <recommendedName>
        <fullName>Rubredoxin</fullName>
        <shortName>Rd</shortName>
    </recommendedName>
</protein>
<comment type="function">
    <text evidence="1">Rubredoxin is a small nonheme, iron protein lacking acid-labile sulfide. Its single Fe, chelated to 4 Cys, functions as an electron acceptor and may also stabilize the conformation of the molecule. Could be involved in hydrogenase-linked redox processes (By similarity).</text>
</comment>
<comment type="cofactor">
    <cofactor evidence="1">
        <name>Fe(3+)</name>
        <dbReference type="ChEBI" id="CHEBI:29034"/>
    </cofactor>
    <text evidence="1">Binds 1 Fe(3+) ion per subunit.</text>
</comment>
<comment type="similarity">
    <text evidence="3">Belongs to the rubredoxin family.</text>
</comment>
<sequence length="111" mass="12134">MSEQAVENTVLDRFECRSCGYVYEPEKGDNKHDIAPETPFAELPINWRCPVCTAKKAAFTNIGPAGTASGFRENLGYGLGVNKLTPAQKNILIFGALALGFLFFISLYGLQ</sequence>
<feature type="chain" id="PRO_0000135051" description="Rubredoxin">
    <location>
        <begin position="1"/>
        <end position="111"/>
    </location>
</feature>
<feature type="domain" description="Rubredoxin-like" evidence="2">
    <location>
        <begin position="11"/>
        <end position="62"/>
    </location>
</feature>
<feature type="binding site" evidence="2">
    <location>
        <position position="16"/>
    </location>
    <ligand>
        <name>Fe cation</name>
        <dbReference type="ChEBI" id="CHEBI:24875"/>
    </ligand>
</feature>
<feature type="binding site" evidence="2">
    <location>
        <position position="19"/>
    </location>
    <ligand>
        <name>Fe cation</name>
        <dbReference type="ChEBI" id="CHEBI:24875"/>
    </ligand>
</feature>
<feature type="binding site" evidence="2">
    <location>
        <position position="49"/>
    </location>
    <ligand>
        <name>Fe cation</name>
        <dbReference type="ChEBI" id="CHEBI:24875"/>
    </ligand>
</feature>
<feature type="binding site" evidence="2">
    <location>
        <position position="52"/>
    </location>
    <ligand>
        <name>Fe cation</name>
        <dbReference type="ChEBI" id="CHEBI:24875"/>
    </ligand>
</feature>
<feature type="sequence conflict" description="In Ref. 1; CAB45638." evidence="3" ref="1">
    <original>A</original>
    <variation>G</variation>
    <location>
        <position position="68"/>
    </location>
</feature>
<accession>Q9WWN1</accession>
<gene>
    <name type="primary">rub</name>
    <name type="synonym">hoxR</name>
    <name type="ordered locus">alr3843</name>
</gene>
<keyword id="KW-0249">Electron transport</keyword>
<keyword id="KW-0408">Iron</keyword>
<keyword id="KW-0479">Metal-binding</keyword>
<keyword id="KW-1185">Reference proteome</keyword>
<keyword id="KW-0813">Transport</keyword>